<keyword id="KW-0030">Aminoacyl-tRNA synthetase</keyword>
<keyword id="KW-0067">ATP-binding</keyword>
<keyword id="KW-0963">Cytoplasm</keyword>
<keyword id="KW-0436">Ligase</keyword>
<keyword id="KW-0547">Nucleotide-binding</keyword>
<keyword id="KW-0648">Protein biosynthesis</keyword>
<name>SYH_RHOJR</name>
<reference key="1">
    <citation type="journal article" date="2006" name="Proc. Natl. Acad. Sci. U.S.A.">
        <title>The complete genome of Rhodococcus sp. RHA1 provides insights into a catabolic powerhouse.</title>
        <authorList>
            <person name="McLeod M.P."/>
            <person name="Warren R.L."/>
            <person name="Hsiao W.W.L."/>
            <person name="Araki N."/>
            <person name="Myhre M."/>
            <person name="Fernandes C."/>
            <person name="Miyazawa D."/>
            <person name="Wong W."/>
            <person name="Lillquist A.L."/>
            <person name="Wang D."/>
            <person name="Dosanjh M."/>
            <person name="Hara H."/>
            <person name="Petrescu A."/>
            <person name="Morin R.D."/>
            <person name="Yang G."/>
            <person name="Stott J.M."/>
            <person name="Schein J.E."/>
            <person name="Shin H."/>
            <person name="Smailus D."/>
            <person name="Siddiqui A.S."/>
            <person name="Marra M.A."/>
            <person name="Jones S.J.M."/>
            <person name="Holt R."/>
            <person name="Brinkman F.S.L."/>
            <person name="Miyauchi K."/>
            <person name="Fukuda M."/>
            <person name="Davies J.E."/>
            <person name="Mohn W.W."/>
            <person name="Eltis L.D."/>
        </authorList>
    </citation>
    <scope>NUCLEOTIDE SEQUENCE [LARGE SCALE GENOMIC DNA]</scope>
    <source>
        <strain>RHA1</strain>
    </source>
</reference>
<gene>
    <name evidence="1" type="primary">hisS</name>
    <name type="ordered locus">RHA1_ro06904</name>
</gene>
<sequence>MSKASTFSAPKGVPDYVPPQSSEFVAVRDGLTRAARLAGYGHIELPIFEDTGLFARGVGESTDVVSKEMYTFADRGDRSVTLRPEGTAGVMRAVIEHGLDRGQLPVKLSYAGPFFRYERPQAGRYRQLQQVGVEAIGVDDPALDAEVIAIADAGFRGLGLDGFRLEITSLGDDTCRPQYRERLQEFLFALPLDEETRRRAEINPLRVLDDKRKEVREMTADAPLMLDHLSDTAKAHFDEVLAHLDALSVPYVVNPRMVRGLDYYTKTTFEFVHDGLGAQSGIGGGGRYDGLMAQLGGQPLSGIGFGLGVDRTVLALAAEGKTAGSTARCEVFGVPLGEEAKAKLVVIAQQLRAQGIRVDLAYGNRGVKGAMKAADRSGAALALVLGDRDIADGTVGIKNLATGDQESVSSADVVARVGAILGA</sequence>
<accession>Q0S1B6</accession>
<comment type="catalytic activity">
    <reaction evidence="1">
        <text>tRNA(His) + L-histidine + ATP = L-histidyl-tRNA(His) + AMP + diphosphate + H(+)</text>
        <dbReference type="Rhea" id="RHEA:17313"/>
        <dbReference type="Rhea" id="RHEA-COMP:9665"/>
        <dbReference type="Rhea" id="RHEA-COMP:9689"/>
        <dbReference type="ChEBI" id="CHEBI:15378"/>
        <dbReference type="ChEBI" id="CHEBI:30616"/>
        <dbReference type="ChEBI" id="CHEBI:33019"/>
        <dbReference type="ChEBI" id="CHEBI:57595"/>
        <dbReference type="ChEBI" id="CHEBI:78442"/>
        <dbReference type="ChEBI" id="CHEBI:78527"/>
        <dbReference type="ChEBI" id="CHEBI:456215"/>
        <dbReference type="EC" id="6.1.1.21"/>
    </reaction>
</comment>
<comment type="subunit">
    <text evidence="1">Homodimer.</text>
</comment>
<comment type="subcellular location">
    <subcellularLocation>
        <location evidence="1">Cytoplasm</location>
    </subcellularLocation>
</comment>
<comment type="similarity">
    <text evidence="1">Belongs to the class-II aminoacyl-tRNA synthetase family.</text>
</comment>
<protein>
    <recommendedName>
        <fullName evidence="1">Histidine--tRNA ligase</fullName>
        <ecNumber evidence="1">6.1.1.21</ecNumber>
    </recommendedName>
    <alternativeName>
        <fullName evidence="1">Histidyl-tRNA synthetase</fullName>
        <shortName evidence="1">HisRS</shortName>
    </alternativeName>
</protein>
<organism>
    <name type="scientific">Rhodococcus jostii (strain RHA1)</name>
    <dbReference type="NCBI Taxonomy" id="101510"/>
    <lineage>
        <taxon>Bacteria</taxon>
        <taxon>Bacillati</taxon>
        <taxon>Actinomycetota</taxon>
        <taxon>Actinomycetes</taxon>
        <taxon>Mycobacteriales</taxon>
        <taxon>Nocardiaceae</taxon>
        <taxon>Rhodococcus</taxon>
    </lineage>
</organism>
<evidence type="ECO:0000255" key="1">
    <source>
        <dbReference type="HAMAP-Rule" id="MF_00127"/>
    </source>
</evidence>
<feature type="chain" id="PRO_1000016434" description="Histidine--tRNA ligase">
    <location>
        <begin position="1"/>
        <end position="423"/>
    </location>
</feature>
<proteinExistence type="inferred from homology"/>
<dbReference type="EC" id="6.1.1.21" evidence="1"/>
<dbReference type="EMBL" id="CP000431">
    <property type="protein sequence ID" value="ABG98670.1"/>
    <property type="molecule type" value="Genomic_DNA"/>
</dbReference>
<dbReference type="RefSeq" id="WP_011598646.1">
    <property type="nucleotide sequence ID" value="NC_008268.1"/>
</dbReference>
<dbReference type="SMR" id="Q0S1B6"/>
<dbReference type="KEGG" id="rha:RHA1_ro06904"/>
<dbReference type="PATRIC" id="fig|101510.16.peg.6963"/>
<dbReference type="eggNOG" id="COG0124">
    <property type="taxonomic scope" value="Bacteria"/>
</dbReference>
<dbReference type="HOGENOM" id="CLU_025113_1_1_11"/>
<dbReference type="OrthoDB" id="9800814at2"/>
<dbReference type="Proteomes" id="UP000008710">
    <property type="component" value="Chromosome"/>
</dbReference>
<dbReference type="GO" id="GO:0005737">
    <property type="term" value="C:cytoplasm"/>
    <property type="evidence" value="ECO:0007669"/>
    <property type="project" value="UniProtKB-SubCell"/>
</dbReference>
<dbReference type="GO" id="GO:0005524">
    <property type="term" value="F:ATP binding"/>
    <property type="evidence" value="ECO:0007669"/>
    <property type="project" value="UniProtKB-UniRule"/>
</dbReference>
<dbReference type="GO" id="GO:0004821">
    <property type="term" value="F:histidine-tRNA ligase activity"/>
    <property type="evidence" value="ECO:0007669"/>
    <property type="project" value="UniProtKB-UniRule"/>
</dbReference>
<dbReference type="GO" id="GO:0006427">
    <property type="term" value="P:histidyl-tRNA aminoacylation"/>
    <property type="evidence" value="ECO:0007669"/>
    <property type="project" value="UniProtKB-UniRule"/>
</dbReference>
<dbReference type="CDD" id="cd00773">
    <property type="entry name" value="HisRS-like_core"/>
    <property type="match status" value="1"/>
</dbReference>
<dbReference type="CDD" id="cd00859">
    <property type="entry name" value="HisRS_anticodon"/>
    <property type="match status" value="1"/>
</dbReference>
<dbReference type="Gene3D" id="3.40.50.800">
    <property type="entry name" value="Anticodon-binding domain"/>
    <property type="match status" value="1"/>
</dbReference>
<dbReference type="Gene3D" id="3.30.930.10">
    <property type="entry name" value="Bira Bifunctional Protein, Domain 2"/>
    <property type="match status" value="1"/>
</dbReference>
<dbReference type="HAMAP" id="MF_00127">
    <property type="entry name" value="His_tRNA_synth"/>
    <property type="match status" value="1"/>
</dbReference>
<dbReference type="InterPro" id="IPR006195">
    <property type="entry name" value="aa-tRNA-synth_II"/>
</dbReference>
<dbReference type="InterPro" id="IPR045864">
    <property type="entry name" value="aa-tRNA-synth_II/BPL/LPL"/>
</dbReference>
<dbReference type="InterPro" id="IPR004154">
    <property type="entry name" value="Anticodon-bd"/>
</dbReference>
<dbReference type="InterPro" id="IPR036621">
    <property type="entry name" value="Anticodon-bd_dom_sf"/>
</dbReference>
<dbReference type="InterPro" id="IPR015807">
    <property type="entry name" value="His-tRNA-ligase"/>
</dbReference>
<dbReference type="InterPro" id="IPR041715">
    <property type="entry name" value="HisRS-like_core"/>
</dbReference>
<dbReference type="InterPro" id="IPR004516">
    <property type="entry name" value="HisRS/HisZ"/>
</dbReference>
<dbReference type="InterPro" id="IPR033656">
    <property type="entry name" value="HisRS_anticodon"/>
</dbReference>
<dbReference type="NCBIfam" id="TIGR00442">
    <property type="entry name" value="hisS"/>
    <property type="match status" value="1"/>
</dbReference>
<dbReference type="PANTHER" id="PTHR43707:SF1">
    <property type="entry name" value="HISTIDINE--TRNA LIGASE, MITOCHONDRIAL-RELATED"/>
    <property type="match status" value="1"/>
</dbReference>
<dbReference type="PANTHER" id="PTHR43707">
    <property type="entry name" value="HISTIDYL-TRNA SYNTHETASE"/>
    <property type="match status" value="1"/>
</dbReference>
<dbReference type="Pfam" id="PF03129">
    <property type="entry name" value="HGTP_anticodon"/>
    <property type="match status" value="1"/>
</dbReference>
<dbReference type="Pfam" id="PF13393">
    <property type="entry name" value="tRNA-synt_His"/>
    <property type="match status" value="1"/>
</dbReference>
<dbReference type="PIRSF" id="PIRSF001549">
    <property type="entry name" value="His-tRNA_synth"/>
    <property type="match status" value="1"/>
</dbReference>
<dbReference type="SUPFAM" id="SSF52954">
    <property type="entry name" value="Class II aaRS ABD-related"/>
    <property type="match status" value="1"/>
</dbReference>
<dbReference type="SUPFAM" id="SSF55681">
    <property type="entry name" value="Class II aaRS and biotin synthetases"/>
    <property type="match status" value="1"/>
</dbReference>
<dbReference type="PROSITE" id="PS50862">
    <property type="entry name" value="AA_TRNA_LIGASE_II"/>
    <property type="match status" value="1"/>
</dbReference>